<keyword id="KW-0963">Cytoplasm</keyword>
<keyword id="KW-0489">Methyltransferase</keyword>
<keyword id="KW-1185">Reference proteome</keyword>
<keyword id="KW-0949">S-adenosyl-L-methionine</keyword>
<keyword id="KW-0808">Transferase</keyword>
<proteinExistence type="inferred from homology"/>
<sequence length="299" mass="33459">MVQRWWEITVTCQAEAEELVYWRLQSFGCQGTATQLQQGRVLIQGYVPQQRVSLLDIAALGVWIEQDVVAQGYLSPKLHWQLVNEQDWAHSWQAYWHPIPVGDRLLICPAWEMPPLDNTRLVIKLDPGMAFGTGTHETTQLCLEALEMQLDQTFEPLPPTVIADIGCGSGILAIASLLLGAQKAYAVDTSDLAVTATQRNAELNGIRADQLIVHQGSWEQVLELVDGVVCNILAPVIIEILPHLPAIVKPKGWGIFSGILLDQADRVAEQLKRQGWSLGSVWRRNEWCCLNARFERLPD</sequence>
<evidence type="ECO:0000255" key="1">
    <source>
        <dbReference type="HAMAP-Rule" id="MF_00735"/>
    </source>
</evidence>
<protein>
    <recommendedName>
        <fullName evidence="1">Ribosomal protein L11 methyltransferase</fullName>
        <shortName evidence="1">L11 Mtase</shortName>
        <ecNumber evidence="1">2.1.1.-</ecNumber>
    </recommendedName>
</protein>
<accession>Q8DM00</accession>
<name>PRMA_THEVB</name>
<gene>
    <name evidence="1" type="primary">prmA</name>
    <name type="ordered locus">tlr0326</name>
</gene>
<reference key="1">
    <citation type="journal article" date="2002" name="DNA Res.">
        <title>Complete genome structure of the thermophilic cyanobacterium Thermosynechococcus elongatus BP-1.</title>
        <authorList>
            <person name="Nakamura Y."/>
            <person name="Kaneko T."/>
            <person name="Sato S."/>
            <person name="Ikeuchi M."/>
            <person name="Katoh H."/>
            <person name="Sasamoto S."/>
            <person name="Watanabe A."/>
            <person name="Iriguchi M."/>
            <person name="Kawashima K."/>
            <person name="Kimura T."/>
            <person name="Kishida Y."/>
            <person name="Kiyokawa C."/>
            <person name="Kohara M."/>
            <person name="Matsumoto M."/>
            <person name="Matsuno A."/>
            <person name="Nakazaki N."/>
            <person name="Shimpo S."/>
            <person name="Sugimoto M."/>
            <person name="Takeuchi C."/>
            <person name="Yamada M."/>
            <person name="Tabata S."/>
        </authorList>
    </citation>
    <scope>NUCLEOTIDE SEQUENCE [LARGE SCALE GENOMIC DNA]</scope>
    <source>
        <strain>NIES-2133 / IAM M-273 / BP-1</strain>
    </source>
</reference>
<comment type="function">
    <text evidence="1">Methylates ribosomal protein L11.</text>
</comment>
<comment type="catalytic activity">
    <reaction evidence="1">
        <text>L-lysyl-[protein] + 3 S-adenosyl-L-methionine = N(6),N(6),N(6)-trimethyl-L-lysyl-[protein] + 3 S-adenosyl-L-homocysteine + 3 H(+)</text>
        <dbReference type="Rhea" id="RHEA:54192"/>
        <dbReference type="Rhea" id="RHEA-COMP:9752"/>
        <dbReference type="Rhea" id="RHEA-COMP:13826"/>
        <dbReference type="ChEBI" id="CHEBI:15378"/>
        <dbReference type="ChEBI" id="CHEBI:29969"/>
        <dbReference type="ChEBI" id="CHEBI:57856"/>
        <dbReference type="ChEBI" id="CHEBI:59789"/>
        <dbReference type="ChEBI" id="CHEBI:61961"/>
    </reaction>
</comment>
<comment type="subcellular location">
    <subcellularLocation>
        <location evidence="1">Cytoplasm</location>
    </subcellularLocation>
</comment>
<comment type="similarity">
    <text evidence="1">Belongs to the methyltransferase superfamily. PrmA family.</text>
</comment>
<organism>
    <name type="scientific">Thermosynechococcus vestitus (strain NIES-2133 / IAM M-273 / BP-1)</name>
    <dbReference type="NCBI Taxonomy" id="197221"/>
    <lineage>
        <taxon>Bacteria</taxon>
        <taxon>Bacillati</taxon>
        <taxon>Cyanobacteriota</taxon>
        <taxon>Cyanophyceae</taxon>
        <taxon>Acaryochloridales</taxon>
        <taxon>Thermosynechococcaceae</taxon>
        <taxon>Thermosynechococcus</taxon>
    </lineage>
</organism>
<feature type="chain" id="PRO_0000192323" description="Ribosomal protein L11 methyltransferase">
    <location>
        <begin position="1"/>
        <end position="299"/>
    </location>
</feature>
<feature type="binding site" evidence="1">
    <location>
        <position position="139"/>
    </location>
    <ligand>
        <name>S-adenosyl-L-methionine</name>
        <dbReference type="ChEBI" id="CHEBI:59789"/>
    </ligand>
</feature>
<feature type="binding site" evidence="1">
    <location>
        <position position="166"/>
    </location>
    <ligand>
        <name>S-adenosyl-L-methionine</name>
        <dbReference type="ChEBI" id="CHEBI:59789"/>
    </ligand>
</feature>
<feature type="binding site" evidence="1">
    <location>
        <position position="188"/>
    </location>
    <ligand>
        <name>S-adenosyl-L-methionine</name>
        <dbReference type="ChEBI" id="CHEBI:59789"/>
    </ligand>
</feature>
<feature type="binding site" evidence="1">
    <location>
        <position position="231"/>
    </location>
    <ligand>
        <name>S-adenosyl-L-methionine</name>
        <dbReference type="ChEBI" id="CHEBI:59789"/>
    </ligand>
</feature>
<dbReference type="EC" id="2.1.1.-" evidence="1"/>
<dbReference type="EMBL" id="BA000039">
    <property type="protein sequence ID" value="BAC07878.1"/>
    <property type="molecule type" value="Genomic_DNA"/>
</dbReference>
<dbReference type="RefSeq" id="NP_681116.1">
    <property type="nucleotide sequence ID" value="NC_004113.1"/>
</dbReference>
<dbReference type="RefSeq" id="WP_011056181.1">
    <property type="nucleotide sequence ID" value="NC_004113.1"/>
</dbReference>
<dbReference type="SMR" id="Q8DM00"/>
<dbReference type="STRING" id="197221.gene:10746909"/>
<dbReference type="EnsemblBacteria" id="BAC07878">
    <property type="protein sequence ID" value="BAC07878"/>
    <property type="gene ID" value="BAC07878"/>
</dbReference>
<dbReference type="KEGG" id="tel:tlr0326"/>
<dbReference type="PATRIC" id="fig|197221.4.peg.343"/>
<dbReference type="eggNOG" id="COG2264">
    <property type="taxonomic scope" value="Bacteria"/>
</dbReference>
<dbReference type="Proteomes" id="UP000000440">
    <property type="component" value="Chromosome"/>
</dbReference>
<dbReference type="GO" id="GO:0005737">
    <property type="term" value="C:cytoplasm"/>
    <property type="evidence" value="ECO:0007669"/>
    <property type="project" value="UniProtKB-SubCell"/>
</dbReference>
<dbReference type="GO" id="GO:0016279">
    <property type="term" value="F:protein-lysine N-methyltransferase activity"/>
    <property type="evidence" value="ECO:0007669"/>
    <property type="project" value="RHEA"/>
</dbReference>
<dbReference type="GO" id="GO:0032259">
    <property type="term" value="P:methylation"/>
    <property type="evidence" value="ECO:0007669"/>
    <property type="project" value="UniProtKB-KW"/>
</dbReference>
<dbReference type="CDD" id="cd02440">
    <property type="entry name" value="AdoMet_MTases"/>
    <property type="match status" value="1"/>
</dbReference>
<dbReference type="Gene3D" id="3.40.50.150">
    <property type="entry name" value="Vaccinia Virus protein VP39"/>
    <property type="match status" value="1"/>
</dbReference>
<dbReference type="HAMAP" id="MF_00735">
    <property type="entry name" value="Methyltr_PrmA"/>
    <property type="match status" value="1"/>
</dbReference>
<dbReference type="InterPro" id="IPR050078">
    <property type="entry name" value="Ribosomal_L11_MeTrfase_PrmA"/>
</dbReference>
<dbReference type="InterPro" id="IPR004498">
    <property type="entry name" value="Ribosomal_PrmA_MeTrfase"/>
</dbReference>
<dbReference type="InterPro" id="IPR029063">
    <property type="entry name" value="SAM-dependent_MTases_sf"/>
</dbReference>
<dbReference type="NCBIfam" id="TIGR00406">
    <property type="entry name" value="prmA"/>
    <property type="match status" value="1"/>
</dbReference>
<dbReference type="PANTHER" id="PTHR43648">
    <property type="entry name" value="ELECTRON TRANSFER FLAVOPROTEIN BETA SUBUNIT LYSINE METHYLTRANSFERASE"/>
    <property type="match status" value="1"/>
</dbReference>
<dbReference type="PANTHER" id="PTHR43648:SF1">
    <property type="entry name" value="ELECTRON TRANSFER FLAVOPROTEIN BETA SUBUNIT LYSINE METHYLTRANSFERASE"/>
    <property type="match status" value="1"/>
</dbReference>
<dbReference type="Pfam" id="PF06325">
    <property type="entry name" value="PrmA"/>
    <property type="match status" value="1"/>
</dbReference>
<dbReference type="PIRSF" id="PIRSF000401">
    <property type="entry name" value="RPL11_MTase"/>
    <property type="match status" value="1"/>
</dbReference>
<dbReference type="SUPFAM" id="SSF53335">
    <property type="entry name" value="S-adenosyl-L-methionine-dependent methyltransferases"/>
    <property type="match status" value="1"/>
</dbReference>